<name>RL30_LISW6</name>
<evidence type="ECO:0000255" key="1">
    <source>
        <dbReference type="HAMAP-Rule" id="MF_01371"/>
    </source>
</evidence>
<evidence type="ECO:0000305" key="2"/>
<accession>A0ALV0</accession>
<protein>
    <recommendedName>
        <fullName evidence="1">Large ribosomal subunit protein uL30</fullName>
    </recommendedName>
    <alternativeName>
        <fullName evidence="2">50S ribosomal protein L30</fullName>
    </alternativeName>
</protein>
<dbReference type="EMBL" id="AM263198">
    <property type="protein sequence ID" value="CAK21982.1"/>
    <property type="molecule type" value="Genomic_DNA"/>
</dbReference>
<dbReference type="RefSeq" id="WP_011703284.1">
    <property type="nucleotide sequence ID" value="NC_008555.1"/>
</dbReference>
<dbReference type="SMR" id="A0ALV0"/>
<dbReference type="STRING" id="386043.lwe2564"/>
<dbReference type="GeneID" id="61190488"/>
<dbReference type="KEGG" id="lwe:lwe2564"/>
<dbReference type="eggNOG" id="COG1841">
    <property type="taxonomic scope" value="Bacteria"/>
</dbReference>
<dbReference type="HOGENOM" id="CLU_131047_2_1_9"/>
<dbReference type="OrthoDB" id="9812790at2"/>
<dbReference type="Proteomes" id="UP000000779">
    <property type="component" value="Chromosome"/>
</dbReference>
<dbReference type="GO" id="GO:0022625">
    <property type="term" value="C:cytosolic large ribosomal subunit"/>
    <property type="evidence" value="ECO:0007669"/>
    <property type="project" value="TreeGrafter"/>
</dbReference>
<dbReference type="GO" id="GO:0003735">
    <property type="term" value="F:structural constituent of ribosome"/>
    <property type="evidence" value="ECO:0007669"/>
    <property type="project" value="InterPro"/>
</dbReference>
<dbReference type="GO" id="GO:0006412">
    <property type="term" value="P:translation"/>
    <property type="evidence" value="ECO:0007669"/>
    <property type="project" value="UniProtKB-UniRule"/>
</dbReference>
<dbReference type="CDD" id="cd01658">
    <property type="entry name" value="Ribosomal_L30"/>
    <property type="match status" value="1"/>
</dbReference>
<dbReference type="FunFam" id="3.30.1390.20:FF:000001">
    <property type="entry name" value="50S ribosomal protein L30"/>
    <property type="match status" value="1"/>
</dbReference>
<dbReference type="Gene3D" id="3.30.1390.20">
    <property type="entry name" value="Ribosomal protein L30, ferredoxin-like fold domain"/>
    <property type="match status" value="1"/>
</dbReference>
<dbReference type="HAMAP" id="MF_01371_B">
    <property type="entry name" value="Ribosomal_uL30_B"/>
    <property type="match status" value="1"/>
</dbReference>
<dbReference type="InterPro" id="IPR036919">
    <property type="entry name" value="Ribo_uL30_ferredoxin-like_sf"/>
</dbReference>
<dbReference type="InterPro" id="IPR005996">
    <property type="entry name" value="Ribosomal_uL30_bac-type"/>
</dbReference>
<dbReference type="InterPro" id="IPR018038">
    <property type="entry name" value="Ribosomal_uL30_CS"/>
</dbReference>
<dbReference type="InterPro" id="IPR016082">
    <property type="entry name" value="Ribosomal_uL30_ferredoxin-like"/>
</dbReference>
<dbReference type="NCBIfam" id="TIGR01308">
    <property type="entry name" value="rpmD_bact"/>
    <property type="match status" value="1"/>
</dbReference>
<dbReference type="PANTHER" id="PTHR15892:SF2">
    <property type="entry name" value="LARGE RIBOSOMAL SUBUNIT PROTEIN UL30M"/>
    <property type="match status" value="1"/>
</dbReference>
<dbReference type="PANTHER" id="PTHR15892">
    <property type="entry name" value="MITOCHONDRIAL RIBOSOMAL PROTEIN L30"/>
    <property type="match status" value="1"/>
</dbReference>
<dbReference type="Pfam" id="PF00327">
    <property type="entry name" value="Ribosomal_L30"/>
    <property type="match status" value="1"/>
</dbReference>
<dbReference type="PIRSF" id="PIRSF002211">
    <property type="entry name" value="Ribosomal_L30_bac-type"/>
    <property type="match status" value="1"/>
</dbReference>
<dbReference type="SUPFAM" id="SSF55129">
    <property type="entry name" value="Ribosomal protein L30p/L7e"/>
    <property type="match status" value="1"/>
</dbReference>
<dbReference type="PROSITE" id="PS00634">
    <property type="entry name" value="RIBOSOMAL_L30"/>
    <property type="match status" value="1"/>
</dbReference>
<organism>
    <name type="scientific">Listeria welshimeri serovar 6b (strain ATCC 35897 / DSM 20650 / CCUG 15529 / CIP 8149 / NCTC 11857 / SLCC 5334 / V8)</name>
    <dbReference type="NCBI Taxonomy" id="386043"/>
    <lineage>
        <taxon>Bacteria</taxon>
        <taxon>Bacillati</taxon>
        <taxon>Bacillota</taxon>
        <taxon>Bacilli</taxon>
        <taxon>Bacillales</taxon>
        <taxon>Listeriaceae</taxon>
        <taxon>Listeria</taxon>
    </lineage>
</organism>
<sequence length="59" mass="6521">MAKLEITLKRSLIGRPQPQRRTVQALGLGKTNSVVVKEDNPAIRGMITKVSHLVDVKEV</sequence>
<gene>
    <name evidence="1" type="primary">rpmD</name>
    <name type="ordered locus">lwe2564</name>
</gene>
<feature type="chain" id="PRO_1000056066" description="Large ribosomal subunit protein uL30">
    <location>
        <begin position="1"/>
        <end position="59"/>
    </location>
</feature>
<comment type="subunit">
    <text evidence="1">Part of the 50S ribosomal subunit.</text>
</comment>
<comment type="similarity">
    <text evidence="1">Belongs to the universal ribosomal protein uL30 family.</text>
</comment>
<reference key="1">
    <citation type="journal article" date="2006" name="J. Bacteriol.">
        <title>Whole-genome sequence of Listeria welshimeri reveals common steps in genome reduction with Listeria innocua as compared to Listeria monocytogenes.</title>
        <authorList>
            <person name="Hain T."/>
            <person name="Steinweg C."/>
            <person name="Kuenne C.T."/>
            <person name="Billion A."/>
            <person name="Ghai R."/>
            <person name="Chatterjee S.S."/>
            <person name="Domann E."/>
            <person name="Kaerst U."/>
            <person name="Goesmann A."/>
            <person name="Bekel T."/>
            <person name="Bartels D."/>
            <person name="Kaiser O."/>
            <person name="Meyer F."/>
            <person name="Puehler A."/>
            <person name="Weisshaar B."/>
            <person name="Wehland J."/>
            <person name="Liang C."/>
            <person name="Dandekar T."/>
            <person name="Lampidis R."/>
            <person name="Kreft J."/>
            <person name="Goebel W."/>
            <person name="Chakraborty T."/>
        </authorList>
    </citation>
    <scope>NUCLEOTIDE SEQUENCE [LARGE SCALE GENOMIC DNA]</scope>
    <source>
        <strain>ATCC 35897 / DSM 20650 / CCUG 15529 / CIP 8149 / NCTC 11857 / SLCC 5334 / V8</strain>
    </source>
</reference>
<keyword id="KW-0687">Ribonucleoprotein</keyword>
<keyword id="KW-0689">Ribosomal protein</keyword>
<proteinExistence type="inferred from homology"/>